<dbReference type="EMBL" id="AC245291">
    <property type="status" value="NOT_ANNOTATED_CDS"/>
    <property type="molecule type" value="Genomic_DNA"/>
</dbReference>
<dbReference type="PIR" id="A01993">
    <property type="entry name" value="LVHU2"/>
</dbReference>
<dbReference type="SMR" id="P04211"/>
<dbReference type="FunCoup" id="P04211">
    <property type="interactions" value="353"/>
</dbReference>
<dbReference type="DrugBank" id="DB08295">
    <property type="generic name" value="4-HYDROXY-3-NITROPHENYLACETYL-EPSILON-AMINOCAPROIC ACID ANION"/>
</dbReference>
<dbReference type="DrugBank" id="DB08273">
    <property type="generic name" value="4-HYDROXY-5-IODO-3-NITROPHENYLACETYL-EPSILON-AMINOCAPROIC ACID ANION"/>
</dbReference>
<dbReference type="IMGT_GENE-DB" id="IGLV7-43"/>
<dbReference type="BioMuta" id="IGLV7-43"/>
<dbReference type="DMDM" id="126536"/>
<dbReference type="jPOST" id="P04211"/>
<dbReference type="MassIVE" id="P04211"/>
<dbReference type="Ensembl" id="ENST00000390298.2">
    <property type="protein sequence ID" value="ENSP00000374833.2"/>
    <property type="gene ID" value="ENSG00000211652.2"/>
</dbReference>
<dbReference type="Ensembl" id="ENST00000618644.2">
    <property type="protein sequence ID" value="ENSP00000480490.2"/>
    <property type="gene ID" value="ENSG00000278293.2"/>
</dbReference>
<dbReference type="AGR" id="HGNC:5929"/>
<dbReference type="GeneCards" id="IGLV7-43"/>
<dbReference type="HGNC" id="HGNC:5929">
    <property type="gene designation" value="IGLV7-43"/>
</dbReference>
<dbReference type="HPA" id="ENSG00000211652">
    <property type="expression patterns" value="Tissue enhanced (intestine, lymphoid tissue, stomach)"/>
</dbReference>
<dbReference type="neXtProt" id="NX_P04211"/>
<dbReference type="OpenTargets" id="ENSG00000211652"/>
<dbReference type="VEuPathDB" id="HostDB:ENSG00000211652"/>
<dbReference type="GeneTree" id="ENSGT00940000162204"/>
<dbReference type="InParanoid" id="P04211"/>
<dbReference type="OMA" id="EDEYHYQ"/>
<dbReference type="OrthoDB" id="8908372at2759"/>
<dbReference type="PAN-GO" id="P04211">
    <property type="GO annotations" value="3 GO annotations based on evolutionary models"/>
</dbReference>
<dbReference type="PhylomeDB" id="P04211"/>
<dbReference type="PathwayCommons" id="P04211"/>
<dbReference type="Reactome" id="R-HSA-166663">
    <property type="pathway name" value="Initial triggering of complement"/>
</dbReference>
<dbReference type="Reactome" id="R-HSA-173623">
    <property type="pathway name" value="Classical antibody-mediated complement activation"/>
</dbReference>
<dbReference type="Reactome" id="R-HSA-198933">
    <property type="pathway name" value="Immunoregulatory interactions between a Lymphoid and a non-Lymphoid cell"/>
</dbReference>
<dbReference type="Reactome" id="R-HSA-202733">
    <property type="pathway name" value="Cell surface interactions at the vascular wall"/>
</dbReference>
<dbReference type="Reactome" id="R-HSA-2029481">
    <property type="pathway name" value="FCGR activation"/>
</dbReference>
<dbReference type="Reactome" id="R-HSA-2029482">
    <property type="pathway name" value="Regulation of actin dynamics for phagocytic cup formation"/>
</dbReference>
<dbReference type="Reactome" id="R-HSA-2029485">
    <property type="pathway name" value="Role of phospholipids in phagocytosis"/>
</dbReference>
<dbReference type="Reactome" id="R-HSA-2168880">
    <property type="pathway name" value="Scavenging of heme from plasma"/>
</dbReference>
<dbReference type="Reactome" id="R-HSA-2454202">
    <property type="pathway name" value="Fc epsilon receptor (FCERI) signaling"/>
</dbReference>
<dbReference type="Reactome" id="R-HSA-2730905">
    <property type="pathway name" value="Role of LAT2/NTAL/LAB on calcium mobilization"/>
</dbReference>
<dbReference type="Reactome" id="R-HSA-2871796">
    <property type="pathway name" value="FCERI mediated MAPK activation"/>
</dbReference>
<dbReference type="Reactome" id="R-HSA-2871809">
    <property type="pathway name" value="FCERI mediated Ca+2 mobilization"/>
</dbReference>
<dbReference type="Reactome" id="R-HSA-2871837">
    <property type="pathway name" value="FCERI mediated NF-kB activation"/>
</dbReference>
<dbReference type="Reactome" id="R-HSA-5690714">
    <property type="pathway name" value="CD22 mediated BCR regulation"/>
</dbReference>
<dbReference type="Reactome" id="R-HSA-9664323">
    <property type="pathway name" value="FCGR3A-mediated IL10 synthesis"/>
</dbReference>
<dbReference type="Reactome" id="R-HSA-9664422">
    <property type="pathway name" value="FCGR3A-mediated phagocytosis"/>
</dbReference>
<dbReference type="Reactome" id="R-HSA-9679191">
    <property type="pathway name" value="Potential therapeutics for SARS"/>
</dbReference>
<dbReference type="Reactome" id="R-HSA-977606">
    <property type="pathway name" value="Regulation of Complement cascade"/>
</dbReference>
<dbReference type="Reactome" id="R-HSA-983695">
    <property type="pathway name" value="Antigen activates B Cell Receptor (BCR) leading to generation of second messengers"/>
</dbReference>
<dbReference type="SignaLink" id="P04211"/>
<dbReference type="Pharos" id="P04211">
    <property type="development level" value="Tdark"/>
</dbReference>
<dbReference type="PRO" id="PR:P04211"/>
<dbReference type="Proteomes" id="UP000005640">
    <property type="component" value="Chromosome 22"/>
</dbReference>
<dbReference type="RNAct" id="P04211">
    <property type="molecule type" value="protein"/>
</dbReference>
<dbReference type="Bgee" id="ENSG00000211652">
    <property type="expression patterns" value="Expressed in duodenum and 83 other cell types or tissues"/>
</dbReference>
<dbReference type="GO" id="GO:0005576">
    <property type="term" value="C:extracellular region"/>
    <property type="evidence" value="ECO:0000304"/>
    <property type="project" value="Reactome"/>
</dbReference>
<dbReference type="GO" id="GO:0019814">
    <property type="term" value="C:immunoglobulin complex"/>
    <property type="evidence" value="ECO:0000318"/>
    <property type="project" value="GO_Central"/>
</dbReference>
<dbReference type="GO" id="GO:0005886">
    <property type="term" value="C:plasma membrane"/>
    <property type="evidence" value="ECO:0000304"/>
    <property type="project" value="Reactome"/>
</dbReference>
<dbReference type="GO" id="GO:0003823">
    <property type="term" value="F:antigen binding"/>
    <property type="evidence" value="ECO:0000303"/>
    <property type="project" value="UniProtKB"/>
</dbReference>
<dbReference type="GO" id="GO:0002250">
    <property type="term" value="P:adaptive immune response"/>
    <property type="evidence" value="ECO:0007669"/>
    <property type="project" value="UniProtKB-KW"/>
</dbReference>
<dbReference type="GO" id="GO:0006955">
    <property type="term" value="P:immune response"/>
    <property type="evidence" value="ECO:0000318"/>
    <property type="project" value="GO_Central"/>
</dbReference>
<dbReference type="FunFam" id="2.60.40.10:FF:001479">
    <property type="entry name" value="Immunoglobulin lambda variable 7-43"/>
    <property type="match status" value="1"/>
</dbReference>
<dbReference type="Gene3D" id="2.60.40.10">
    <property type="entry name" value="Immunoglobulins"/>
    <property type="match status" value="1"/>
</dbReference>
<dbReference type="InterPro" id="IPR007110">
    <property type="entry name" value="Ig-like_dom"/>
</dbReference>
<dbReference type="InterPro" id="IPR036179">
    <property type="entry name" value="Ig-like_dom_sf"/>
</dbReference>
<dbReference type="InterPro" id="IPR013783">
    <property type="entry name" value="Ig-like_fold"/>
</dbReference>
<dbReference type="InterPro" id="IPR003599">
    <property type="entry name" value="Ig_sub"/>
</dbReference>
<dbReference type="InterPro" id="IPR013106">
    <property type="entry name" value="Ig_V-set"/>
</dbReference>
<dbReference type="InterPro" id="IPR050150">
    <property type="entry name" value="IgV_Light_Chain"/>
</dbReference>
<dbReference type="PANTHER" id="PTHR23267">
    <property type="entry name" value="IMMUNOGLOBULIN LIGHT CHAIN"/>
    <property type="match status" value="1"/>
</dbReference>
<dbReference type="Pfam" id="PF07686">
    <property type="entry name" value="V-set"/>
    <property type="match status" value="1"/>
</dbReference>
<dbReference type="SMART" id="SM00409">
    <property type="entry name" value="IG"/>
    <property type="match status" value="1"/>
</dbReference>
<dbReference type="SMART" id="SM00406">
    <property type="entry name" value="IGv"/>
    <property type="match status" value="1"/>
</dbReference>
<dbReference type="SUPFAM" id="SSF48726">
    <property type="entry name" value="Immunoglobulin"/>
    <property type="match status" value="1"/>
</dbReference>
<dbReference type="PROSITE" id="PS50835">
    <property type="entry name" value="IG_LIKE"/>
    <property type="match status" value="1"/>
</dbReference>
<evidence type="ECO:0000250" key="1">
    <source>
        <dbReference type="UniProtKB" id="P01721"/>
    </source>
</evidence>
<evidence type="ECO:0000255" key="2"/>
<evidence type="ECO:0000255" key="3">
    <source>
        <dbReference type="PROSITE-ProRule" id="PRU00114"/>
    </source>
</evidence>
<evidence type="ECO:0000303" key="4">
    <source>
    </source>
</evidence>
<evidence type="ECO:0000303" key="5">
    <source>
    </source>
</evidence>
<evidence type="ECO:0000303" key="6">
    <source>
    </source>
</evidence>
<evidence type="ECO:0000303" key="7">
    <source>
    </source>
</evidence>
<evidence type="ECO:0000303" key="8">
    <source>
    </source>
</evidence>
<evidence type="ECO:0000303" key="9">
    <source ref="4"/>
</evidence>
<evidence type="ECO:0000305" key="10"/>
<evidence type="ECO:0000305" key="11">
    <source>
    </source>
</evidence>
<feature type="signal peptide" evidence="2">
    <location>
        <begin position="1"/>
        <end position="19"/>
    </location>
</feature>
<feature type="chain" id="PRO_0000015198" description="Immunoglobulin lambda variable 7-43" evidence="2">
    <location>
        <begin position="20"/>
        <end position="117"/>
    </location>
</feature>
<feature type="domain" description="Ig-like" evidence="3">
    <location>
        <begin position="20"/>
        <end position="117" status="greater than"/>
    </location>
</feature>
<feature type="region of interest" description="Framework-1" evidence="1">
    <location>
        <begin position="20"/>
        <end position="44"/>
    </location>
</feature>
<feature type="region of interest" description="Complementarity-determining-1" evidence="1">
    <location>
        <begin position="45"/>
        <end position="53"/>
    </location>
</feature>
<feature type="region of interest" description="Framework-2" evidence="1">
    <location>
        <begin position="54"/>
        <end position="70"/>
    </location>
</feature>
<feature type="region of interest" description="Complementarity-determining-2" evidence="1">
    <location>
        <begin position="71"/>
        <end position="73"/>
    </location>
</feature>
<feature type="region of interest" description="Framework-3" evidence="1">
    <location>
        <begin position="74"/>
        <end position="109"/>
    </location>
</feature>
<feature type="region of interest" description="Complementarity-determining-3" evidence="1">
    <location>
        <begin position="110"/>
        <end position="117" status="greater than"/>
    </location>
</feature>
<feature type="disulfide bond" evidence="3">
    <location>
        <begin position="41"/>
        <end position="109"/>
    </location>
</feature>
<feature type="sequence conflict" description="In Ref. 1." evidence="10" ref="1">
    <original>P</original>
    <variation>PG</variation>
    <location>
        <position position="15"/>
    </location>
</feature>
<feature type="sequence conflict" description="In Ref. 1." evidence="10" ref="1">
    <location>
        <position position="117"/>
    </location>
</feature>
<feature type="non-terminal residue">
    <location>
        <position position="117"/>
    </location>
</feature>
<sequence length="117" mass="12451">MAWTPLFLFLLTCCPGSNSQTVVTQEPSLTVSPGGTVTLTCASSTGAVTSGYYPNWFQQKPGQAPRALIYSTSNKHSWTPARFSGSLLGGKAALTLSGVQPEDEAEYYCLLYYGGAQ</sequence>
<name>LV743_HUMAN</name>
<protein>
    <recommendedName>
        <fullName evidence="4 9">Immunoglobulin lambda variable 7-43</fullName>
    </recommendedName>
    <alternativeName>
        <fullName evidence="11">Ig lambda chain V region 4A</fullName>
    </alternativeName>
</protein>
<proteinExistence type="evidence at protein level"/>
<keyword id="KW-1064">Adaptive immunity</keyword>
<keyword id="KW-1003">Cell membrane</keyword>
<keyword id="KW-1015">Disulfide bond</keyword>
<keyword id="KW-0391">Immunity</keyword>
<keyword id="KW-1280">Immunoglobulin</keyword>
<keyword id="KW-0393">Immunoglobulin domain</keyword>
<keyword id="KW-0472">Membrane</keyword>
<keyword id="KW-1267">Proteomics identification</keyword>
<keyword id="KW-1185">Reference proteome</keyword>
<keyword id="KW-0964">Secreted</keyword>
<keyword id="KW-0732">Signal</keyword>
<accession>P04211</accession>
<accession>A0A0B4J1U2</accession>
<comment type="function">
    <text evidence="5 6 7 8">V region of the variable domain of immunoglobulin light chains that participates in the antigen recognition (PubMed:24600447). Immunoglobulins, also known as antibodies, are membrane-bound or secreted glycoproteins produced by B lymphocytes. In the recognition phase of humoral immunity, the membrane-bound immunoglobulins serve as receptors which, upon binding of a specific antigen, trigger the clonal expansion and differentiation of B lymphocytes into immunoglobulins-secreting plasma cells. Secreted immunoglobulins mediate the effector phase of humoral immunity, which results in the elimination of bound antigens (PubMed:20176268, PubMed:22158414). The antigen binding site is formed by the variable domain of one heavy chain, together with that of its associated light chain. Thus, each immunoglobulin has two antigen binding sites with remarkable affinity for a particular antigen. The variable domains are assembled by a process called V-(D)-J rearrangement and can then be subjected to somatic hypermutations which, after exposure to antigen and selection, allow affinity maturation for a particular antigen (PubMed:17576170, PubMed:20176268).</text>
</comment>
<comment type="subunit">
    <text evidence="6">Immunoglobulins are composed of two identical heavy chains and two identical light chains; disulfide-linked.</text>
</comment>
<comment type="subcellular location">
    <subcellularLocation>
        <location evidence="6 7">Secreted</location>
    </subcellularLocation>
    <subcellularLocation>
        <location evidence="6 7">Cell membrane</location>
    </subcellularLocation>
</comment>
<comment type="polymorphism">
    <text>There are several alleles. The sequence shown is that of IMGT allele IGLV7-43*01.</text>
</comment>
<comment type="caution">
    <text evidence="10">For an example of a full-length immunoglobulin lambda light chain see AC P0DOX8.</text>
</comment>
<organism>
    <name type="scientific">Homo sapiens</name>
    <name type="common">Human</name>
    <dbReference type="NCBI Taxonomy" id="9606"/>
    <lineage>
        <taxon>Eukaryota</taxon>
        <taxon>Metazoa</taxon>
        <taxon>Chordata</taxon>
        <taxon>Craniata</taxon>
        <taxon>Vertebrata</taxon>
        <taxon>Euteleostomi</taxon>
        <taxon>Mammalia</taxon>
        <taxon>Eutheria</taxon>
        <taxon>Euarchontoglires</taxon>
        <taxon>Primates</taxon>
        <taxon>Haplorrhini</taxon>
        <taxon>Catarrhini</taxon>
        <taxon>Hominidae</taxon>
        <taxon>Homo</taxon>
    </lineage>
</organism>
<gene>
    <name evidence="4 9" type="primary">IGLV7-43</name>
</gene>
<reference key="1">
    <citation type="journal article" date="1984" name="Nucleic Acids Res.">
        <title>The isolation of a human Ig V lambda gene from a recombinant library of chromosome 22 and estimation of its copy number.</title>
        <authorList>
            <person name="Anderson M.L.M."/>
            <person name="Szajnert M.F."/>
            <person name="Kaplan J.C."/>
            <person name="McColl L."/>
            <person name="Young B.D."/>
        </authorList>
    </citation>
    <scope>NUCLEOTIDE SEQUENCE [GENOMIC DNA]</scope>
</reference>
<reference key="2">
    <citation type="journal article" date="1999" name="Nature">
        <title>The DNA sequence of human chromosome 22.</title>
        <authorList>
            <person name="Dunham I."/>
            <person name="Hunt A.R."/>
            <person name="Collins J.E."/>
            <person name="Bruskiewich R."/>
            <person name="Beare D.M."/>
            <person name="Clamp M."/>
            <person name="Smink L.J."/>
            <person name="Ainscough R."/>
            <person name="Almeida J.P."/>
            <person name="Babbage A.K."/>
            <person name="Bagguley C."/>
            <person name="Bailey J."/>
            <person name="Barlow K.F."/>
            <person name="Bates K.N."/>
            <person name="Beasley O.P."/>
            <person name="Bird C.P."/>
            <person name="Blakey S.E."/>
            <person name="Bridgeman A.M."/>
            <person name="Buck D."/>
            <person name="Burgess J."/>
            <person name="Burrill W.D."/>
            <person name="Burton J."/>
            <person name="Carder C."/>
            <person name="Carter N.P."/>
            <person name="Chen Y."/>
            <person name="Clark G."/>
            <person name="Clegg S.M."/>
            <person name="Cobley V.E."/>
            <person name="Cole C.G."/>
            <person name="Collier R.E."/>
            <person name="Connor R."/>
            <person name="Conroy D."/>
            <person name="Corby N.R."/>
            <person name="Coville G.J."/>
            <person name="Cox A.V."/>
            <person name="Davis J."/>
            <person name="Dawson E."/>
            <person name="Dhami P.D."/>
            <person name="Dockree C."/>
            <person name="Dodsworth S.J."/>
            <person name="Durbin R.M."/>
            <person name="Ellington A.G."/>
            <person name="Evans K.L."/>
            <person name="Fey J.M."/>
            <person name="Fleming K."/>
            <person name="French L."/>
            <person name="Garner A.A."/>
            <person name="Gilbert J.G.R."/>
            <person name="Goward M.E."/>
            <person name="Grafham D.V."/>
            <person name="Griffiths M.N.D."/>
            <person name="Hall C."/>
            <person name="Hall R.E."/>
            <person name="Hall-Tamlyn G."/>
            <person name="Heathcott R.W."/>
            <person name="Ho S."/>
            <person name="Holmes S."/>
            <person name="Hunt S.E."/>
            <person name="Jones M.C."/>
            <person name="Kershaw J."/>
            <person name="Kimberley A.M."/>
            <person name="King A."/>
            <person name="Laird G.K."/>
            <person name="Langford C.F."/>
            <person name="Leversha M.A."/>
            <person name="Lloyd C."/>
            <person name="Lloyd D.M."/>
            <person name="Martyn I.D."/>
            <person name="Mashreghi-Mohammadi M."/>
            <person name="Matthews L.H."/>
            <person name="Mccann O.T."/>
            <person name="Mcclay J."/>
            <person name="Mclaren S."/>
            <person name="McMurray A.A."/>
            <person name="Milne S.A."/>
            <person name="Mortimore B.J."/>
            <person name="Odell C.N."/>
            <person name="Pavitt R."/>
            <person name="Pearce A.V."/>
            <person name="Pearson D."/>
            <person name="Phillimore B.J.C.T."/>
            <person name="Phillips S.H."/>
            <person name="Plumb R.W."/>
            <person name="Ramsay H."/>
            <person name="Ramsey Y."/>
            <person name="Rogers L."/>
            <person name="Ross M.T."/>
            <person name="Scott C.E."/>
            <person name="Sehra H.K."/>
            <person name="Skuce C.D."/>
            <person name="Smalley S."/>
            <person name="Smith M.L."/>
            <person name="Soderlund C."/>
            <person name="Spragon L."/>
            <person name="Steward C.A."/>
            <person name="Sulston J.E."/>
            <person name="Swann R.M."/>
            <person name="Vaudin M."/>
            <person name="Wall M."/>
            <person name="Wallis J.M."/>
            <person name="Whiteley M.N."/>
            <person name="Willey D.L."/>
            <person name="Williams L."/>
            <person name="Williams S.A."/>
            <person name="Williamson H."/>
            <person name="Wilmer T.E."/>
            <person name="Wilming L."/>
            <person name="Wright C.L."/>
            <person name="Hubbard T."/>
            <person name="Bentley D.R."/>
            <person name="Beck S."/>
            <person name="Rogers J."/>
            <person name="Shimizu N."/>
            <person name="Minoshima S."/>
            <person name="Kawasaki K."/>
            <person name="Sasaki T."/>
            <person name="Asakawa S."/>
            <person name="Kudoh J."/>
            <person name="Shintani A."/>
            <person name="Shibuya K."/>
            <person name="Yoshizaki Y."/>
            <person name="Aoki N."/>
            <person name="Mitsuyama S."/>
            <person name="Roe B.A."/>
            <person name="Chen F."/>
            <person name="Chu L."/>
            <person name="Crabtree J."/>
            <person name="Deschamps S."/>
            <person name="Do A."/>
            <person name="Do T."/>
            <person name="Dorman A."/>
            <person name="Fang F."/>
            <person name="Fu Y."/>
            <person name="Hu P."/>
            <person name="Hua A."/>
            <person name="Kenton S."/>
            <person name="Lai H."/>
            <person name="Lao H.I."/>
            <person name="Lewis J."/>
            <person name="Lewis S."/>
            <person name="Lin S.-P."/>
            <person name="Loh P."/>
            <person name="Malaj E."/>
            <person name="Nguyen T."/>
            <person name="Pan H."/>
            <person name="Phan S."/>
            <person name="Qi S."/>
            <person name="Qian Y."/>
            <person name="Ray L."/>
            <person name="Ren Q."/>
            <person name="Shaull S."/>
            <person name="Sloan D."/>
            <person name="Song L."/>
            <person name="Wang Q."/>
            <person name="Wang Y."/>
            <person name="Wang Z."/>
            <person name="White J."/>
            <person name="Willingham D."/>
            <person name="Wu H."/>
            <person name="Yao Z."/>
            <person name="Zhan M."/>
            <person name="Zhang G."/>
            <person name="Chissoe S."/>
            <person name="Murray J."/>
            <person name="Miller N."/>
            <person name="Minx P."/>
            <person name="Fulton R."/>
            <person name="Johnson D."/>
            <person name="Bemis G."/>
            <person name="Bentley D."/>
            <person name="Bradshaw H."/>
            <person name="Bourne S."/>
            <person name="Cordes M."/>
            <person name="Du Z."/>
            <person name="Fulton L."/>
            <person name="Goela D."/>
            <person name="Graves T."/>
            <person name="Hawkins J."/>
            <person name="Hinds K."/>
            <person name="Kemp K."/>
            <person name="Latreille P."/>
            <person name="Layman D."/>
            <person name="Ozersky P."/>
            <person name="Rohlfing T."/>
            <person name="Scheet P."/>
            <person name="Walker C."/>
            <person name="Wamsley A."/>
            <person name="Wohldmann P."/>
            <person name="Pepin K."/>
            <person name="Nelson J."/>
            <person name="Korf I."/>
            <person name="Bedell J.A."/>
            <person name="Hillier L.W."/>
            <person name="Mardis E."/>
            <person name="Waterston R."/>
            <person name="Wilson R."/>
            <person name="Emanuel B.S."/>
            <person name="Shaikh T."/>
            <person name="Kurahashi H."/>
            <person name="Saitta S."/>
            <person name="Budarf M.L."/>
            <person name="McDermid H.E."/>
            <person name="Johnson A."/>
            <person name="Wong A.C.C."/>
            <person name="Morrow B.E."/>
            <person name="Edelmann L."/>
            <person name="Kim U.J."/>
            <person name="Shizuya H."/>
            <person name="Simon M.I."/>
            <person name="Dumanski J.P."/>
            <person name="Peyrard M."/>
            <person name="Kedra D."/>
            <person name="Seroussi E."/>
            <person name="Fransson I."/>
            <person name="Tapia I."/>
            <person name="Bruder C.E."/>
            <person name="O'Brien K.P."/>
            <person name="Wilkinson P."/>
            <person name="Bodenteich A."/>
            <person name="Hartman K."/>
            <person name="Hu X."/>
            <person name="Khan A.S."/>
            <person name="Lane L."/>
            <person name="Tilahun Y."/>
            <person name="Wright H."/>
        </authorList>
    </citation>
    <scope>NUCLEOTIDE SEQUENCE [LARGE SCALE GENOMIC DNA] (IMGT ALLELE IGLV7-43*01)</scope>
</reference>
<reference key="3">
    <citation type="journal article" date="2001" name="Exp. Clin. Immunogenet.">
        <title>Nomenclature of the human immunoglobulin lambda (IGL) genes.</title>
        <authorList>
            <person name="Lefranc M.P."/>
        </authorList>
    </citation>
    <scope>NOMENCLATURE</scope>
</reference>
<reference key="4">
    <citation type="book" date="2001" name="The Immunoglobulin FactsBook.">
        <title>The Immunoglobulin FactsBook.</title>
        <editorList>
            <person name="Lefranc M.P."/>
            <person name="Lefranc G."/>
        </editorList>
        <authorList>
            <person name="Lefranc M.P."/>
            <person name="Lefranc G."/>
        </authorList>
    </citation>
    <scope>NOMENCLATURE</scope>
</reference>
<reference key="5">
    <citation type="journal article" date="2007" name="Annu. Rev. Genet.">
        <title>Immunoglobulin somatic hypermutation.</title>
        <authorList>
            <person name="Teng G."/>
            <person name="Papavasiliou F.N."/>
        </authorList>
    </citation>
    <scope>REVIEW ON SOMATIC HYPERMUTATION</scope>
</reference>
<reference key="6">
    <citation type="journal article" date="2010" name="J. Allergy Clin. Immunol.">
        <title>Structure and function of immunoglobulins.</title>
        <authorList>
            <person name="Schroeder H.W. Jr."/>
            <person name="Cavacini L."/>
        </authorList>
    </citation>
    <scope>REVIEW ON IMMUNOGLOBULINS</scope>
</reference>
<reference key="7">
    <citation type="journal article" date="2012" name="Nat. Rev. Immunol.">
        <title>Molecular programming of B cell memory.</title>
        <authorList>
            <person name="McHeyzer-Williams M."/>
            <person name="Okitsu S."/>
            <person name="Wang N."/>
            <person name="McHeyzer-Williams L."/>
        </authorList>
    </citation>
    <scope>REVIEW ON FUNCTION</scope>
</reference>
<reference key="8">
    <citation type="journal article" date="2014" name="Front. Immunol.">
        <title>Immunoglobulin and T Cell Receptor Genes: IMGT((R)) and the Birth and Rise of Immunoinformatics.</title>
        <authorList>
            <person name="Lefranc M.P."/>
        </authorList>
    </citation>
    <scope>NOMENCLATURE</scope>
</reference>